<sequence length="364" mass="40612">MKKDYYEILGLSKGASKDEIKKAYRKIAIKYHPDRNQGNEEAASIFKEATQAYEVLIDDNKKAKYDRFGHSAFEGGGFEGFSGGFSGFSDIFEDFGDIFDSFFTGNKGQERNRKHARGEDLGYNIEISLENAYFGYKNNINITRQILCHSCLGKKSEKGTSPSICNMCNGSGRVVQGGGFFRVTTTCSKCYGEGKTISNPCKSCKGKGRITNQETIQLNIPSGIDNNQQIKMKGKGNVNPDNQEYGDLYVKILIRSHKIFKRNGKDLYAMLPISFTQAALGKEVRIKTIASKEIKIQIPKGIENEEQIIVKGAGMPILQTEKFGNLILITKIKTPKNLNSNAIKLFENLSKELRDGDEIDLLKV</sequence>
<reference key="1">
    <citation type="journal article" date="2004" name="Nucleic Acids Res.">
        <title>Comparative analysis of the Borrelia garinii genome.</title>
        <authorList>
            <person name="Gloeckner G."/>
            <person name="Lehmann R."/>
            <person name="Romualdi A."/>
            <person name="Pradella S."/>
            <person name="Schulte-Spechtel U."/>
            <person name="Schilhabel M."/>
            <person name="Wilske B."/>
            <person name="Suehnel J."/>
            <person name="Platzer M."/>
        </authorList>
    </citation>
    <scope>NUCLEOTIDE SEQUENCE [LARGE SCALE GENOMIC DNA]</scope>
    <source>
        <strain>ATCC BAA-2496 / DSM 23469 / PBi</strain>
    </source>
</reference>
<protein>
    <recommendedName>
        <fullName evidence="1">Chaperone protein DnaJ</fullName>
    </recommendedName>
</protein>
<accession>Q661A4</accession>
<name>DNAJ_BORGP</name>
<evidence type="ECO:0000255" key="1">
    <source>
        <dbReference type="HAMAP-Rule" id="MF_01152"/>
    </source>
</evidence>
<proteinExistence type="inferred from homology"/>
<comment type="function">
    <text evidence="1">Participates actively in the response to hyperosmotic and heat shock by preventing the aggregation of stress-denatured proteins and by disaggregating proteins, also in an autonomous, DnaK-independent fashion. Unfolded proteins bind initially to DnaJ; upon interaction with the DnaJ-bound protein, DnaK hydrolyzes its bound ATP, resulting in the formation of a stable complex. GrpE releases ADP from DnaK; ATP binding to DnaK triggers the release of the substrate protein, thus completing the reaction cycle. Several rounds of ATP-dependent interactions between DnaJ, DnaK and GrpE are required for fully efficient folding. Also involved, together with DnaK and GrpE, in the DNA replication of plasmids through activation of initiation proteins.</text>
</comment>
<comment type="cofactor">
    <cofactor evidence="1">
        <name>Zn(2+)</name>
        <dbReference type="ChEBI" id="CHEBI:29105"/>
    </cofactor>
    <text evidence="1">Binds 2 Zn(2+) ions per monomer.</text>
</comment>
<comment type="subunit">
    <text evidence="1">Homodimer.</text>
</comment>
<comment type="subcellular location">
    <subcellularLocation>
        <location evidence="1">Cytoplasm</location>
    </subcellularLocation>
</comment>
<comment type="domain">
    <text evidence="1">The J domain is necessary and sufficient to stimulate DnaK ATPase activity. Zinc center 1 plays an important role in the autonomous, DnaK-independent chaperone activity of DnaJ. Zinc center 2 is essential for interaction with DnaK and for DnaJ activity.</text>
</comment>
<comment type="similarity">
    <text evidence="1">Belongs to the DnaJ family.</text>
</comment>
<gene>
    <name evidence="1" type="primary">dnaJ</name>
    <name type="ordered locus">BG0528</name>
</gene>
<organism>
    <name type="scientific">Borrelia garinii subsp. bavariensis (strain ATCC BAA-2496 / DSM 23469 / PBi)</name>
    <name type="common">Borreliella bavariensis</name>
    <dbReference type="NCBI Taxonomy" id="290434"/>
    <lineage>
        <taxon>Bacteria</taxon>
        <taxon>Pseudomonadati</taxon>
        <taxon>Spirochaetota</taxon>
        <taxon>Spirochaetia</taxon>
        <taxon>Spirochaetales</taxon>
        <taxon>Borreliaceae</taxon>
        <taxon>Borreliella</taxon>
    </lineage>
</organism>
<feature type="chain" id="PRO_0000070736" description="Chaperone protein DnaJ">
    <location>
        <begin position="1"/>
        <end position="364"/>
    </location>
</feature>
<feature type="domain" description="J" evidence="1">
    <location>
        <begin position="4"/>
        <end position="69"/>
    </location>
</feature>
<feature type="repeat" description="CXXCXGXG motif">
    <location>
        <begin position="148"/>
        <end position="155"/>
    </location>
</feature>
<feature type="repeat" description="CXXCXGXG motif">
    <location>
        <begin position="165"/>
        <end position="172"/>
    </location>
</feature>
<feature type="repeat" description="CXXCXGXG motif">
    <location>
        <begin position="187"/>
        <end position="194"/>
    </location>
</feature>
<feature type="repeat" description="CXXCXGXG motif">
    <location>
        <begin position="201"/>
        <end position="208"/>
    </location>
</feature>
<feature type="zinc finger region" description="CR-type" evidence="1">
    <location>
        <begin position="135"/>
        <end position="213"/>
    </location>
</feature>
<feature type="binding site" evidence="1">
    <location>
        <position position="148"/>
    </location>
    <ligand>
        <name>Zn(2+)</name>
        <dbReference type="ChEBI" id="CHEBI:29105"/>
        <label>1</label>
    </ligand>
</feature>
<feature type="binding site" evidence="1">
    <location>
        <position position="151"/>
    </location>
    <ligand>
        <name>Zn(2+)</name>
        <dbReference type="ChEBI" id="CHEBI:29105"/>
        <label>1</label>
    </ligand>
</feature>
<feature type="binding site" evidence="1">
    <location>
        <position position="165"/>
    </location>
    <ligand>
        <name>Zn(2+)</name>
        <dbReference type="ChEBI" id="CHEBI:29105"/>
        <label>2</label>
    </ligand>
</feature>
<feature type="binding site" evidence="1">
    <location>
        <position position="168"/>
    </location>
    <ligand>
        <name>Zn(2+)</name>
        <dbReference type="ChEBI" id="CHEBI:29105"/>
        <label>2</label>
    </ligand>
</feature>
<feature type="binding site" evidence="1">
    <location>
        <position position="187"/>
    </location>
    <ligand>
        <name>Zn(2+)</name>
        <dbReference type="ChEBI" id="CHEBI:29105"/>
        <label>2</label>
    </ligand>
</feature>
<feature type="binding site" evidence="1">
    <location>
        <position position="190"/>
    </location>
    <ligand>
        <name>Zn(2+)</name>
        <dbReference type="ChEBI" id="CHEBI:29105"/>
        <label>2</label>
    </ligand>
</feature>
<feature type="binding site" evidence="1">
    <location>
        <position position="201"/>
    </location>
    <ligand>
        <name>Zn(2+)</name>
        <dbReference type="ChEBI" id="CHEBI:29105"/>
        <label>1</label>
    </ligand>
</feature>
<feature type="binding site" evidence="1">
    <location>
        <position position="204"/>
    </location>
    <ligand>
        <name>Zn(2+)</name>
        <dbReference type="ChEBI" id="CHEBI:29105"/>
        <label>1</label>
    </ligand>
</feature>
<keyword id="KW-0143">Chaperone</keyword>
<keyword id="KW-0963">Cytoplasm</keyword>
<keyword id="KW-0235">DNA replication</keyword>
<keyword id="KW-0479">Metal-binding</keyword>
<keyword id="KW-0677">Repeat</keyword>
<keyword id="KW-0346">Stress response</keyword>
<keyword id="KW-0862">Zinc</keyword>
<keyword id="KW-0863">Zinc-finger</keyword>
<dbReference type="EMBL" id="CP000013">
    <property type="protein sequence ID" value="AAU07367.1"/>
    <property type="molecule type" value="Genomic_DNA"/>
</dbReference>
<dbReference type="RefSeq" id="WP_011193829.1">
    <property type="nucleotide sequence ID" value="NZ_CP028872.1"/>
</dbReference>
<dbReference type="SMR" id="Q661A4"/>
<dbReference type="GeneID" id="45161310"/>
<dbReference type="KEGG" id="bga:BG0528"/>
<dbReference type="eggNOG" id="COG0484">
    <property type="taxonomic scope" value="Bacteria"/>
</dbReference>
<dbReference type="HOGENOM" id="CLU_017633_0_7_12"/>
<dbReference type="OrthoDB" id="9779889at2"/>
<dbReference type="Proteomes" id="UP000002276">
    <property type="component" value="Chromosome"/>
</dbReference>
<dbReference type="GO" id="GO:0005737">
    <property type="term" value="C:cytoplasm"/>
    <property type="evidence" value="ECO:0007669"/>
    <property type="project" value="UniProtKB-SubCell"/>
</dbReference>
<dbReference type="GO" id="GO:0005524">
    <property type="term" value="F:ATP binding"/>
    <property type="evidence" value="ECO:0007669"/>
    <property type="project" value="InterPro"/>
</dbReference>
<dbReference type="GO" id="GO:0031072">
    <property type="term" value="F:heat shock protein binding"/>
    <property type="evidence" value="ECO:0007669"/>
    <property type="project" value="InterPro"/>
</dbReference>
<dbReference type="GO" id="GO:0051082">
    <property type="term" value="F:unfolded protein binding"/>
    <property type="evidence" value="ECO:0007669"/>
    <property type="project" value="UniProtKB-UniRule"/>
</dbReference>
<dbReference type="GO" id="GO:0008270">
    <property type="term" value="F:zinc ion binding"/>
    <property type="evidence" value="ECO:0007669"/>
    <property type="project" value="UniProtKB-UniRule"/>
</dbReference>
<dbReference type="GO" id="GO:0051085">
    <property type="term" value="P:chaperone cofactor-dependent protein refolding"/>
    <property type="evidence" value="ECO:0007669"/>
    <property type="project" value="TreeGrafter"/>
</dbReference>
<dbReference type="GO" id="GO:0006260">
    <property type="term" value="P:DNA replication"/>
    <property type="evidence" value="ECO:0007669"/>
    <property type="project" value="UniProtKB-KW"/>
</dbReference>
<dbReference type="GO" id="GO:0042026">
    <property type="term" value="P:protein refolding"/>
    <property type="evidence" value="ECO:0007669"/>
    <property type="project" value="TreeGrafter"/>
</dbReference>
<dbReference type="GO" id="GO:0009408">
    <property type="term" value="P:response to heat"/>
    <property type="evidence" value="ECO:0007669"/>
    <property type="project" value="InterPro"/>
</dbReference>
<dbReference type="CDD" id="cd06257">
    <property type="entry name" value="DnaJ"/>
    <property type="match status" value="1"/>
</dbReference>
<dbReference type="CDD" id="cd10747">
    <property type="entry name" value="DnaJ_C"/>
    <property type="match status" value="1"/>
</dbReference>
<dbReference type="CDD" id="cd10719">
    <property type="entry name" value="DnaJ_zf"/>
    <property type="match status" value="1"/>
</dbReference>
<dbReference type="FunFam" id="1.10.287.110:FF:000034">
    <property type="entry name" value="Chaperone protein DnaJ"/>
    <property type="match status" value="1"/>
</dbReference>
<dbReference type="FunFam" id="2.60.260.20:FF:000013">
    <property type="entry name" value="DnaJ subfamily B member 11"/>
    <property type="match status" value="1"/>
</dbReference>
<dbReference type="FunFam" id="2.10.230.10:FF:000002">
    <property type="entry name" value="Molecular chaperone DnaJ"/>
    <property type="match status" value="1"/>
</dbReference>
<dbReference type="Gene3D" id="1.10.287.110">
    <property type="entry name" value="DnaJ domain"/>
    <property type="match status" value="1"/>
</dbReference>
<dbReference type="Gene3D" id="2.10.230.10">
    <property type="entry name" value="Heat shock protein DnaJ, cysteine-rich domain"/>
    <property type="match status" value="1"/>
</dbReference>
<dbReference type="Gene3D" id="2.60.260.20">
    <property type="entry name" value="Urease metallochaperone UreE, N-terminal domain"/>
    <property type="match status" value="2"/>
</dbReference>
<dbReference type="HAMAP" id="MF_01152">
    <property type="entry name" value="DnaJ"/>
    <property type="match status" value="1"/>
</dbReference>
<dbReference type="InterPro" id="IPR012724">
    <property type="entry name" value="DnaJ"/>
</dbReference>
<dbReference type="InterPro" id="IPR002939">
    <property type="entry name" value="DnaJ_C"/>
</dbReference>
<dbReference type="InterPro" id="IPR001623">
    <property type="entry name" value="DnaJ_domain"/>
</dbReference>
<dbReference type="InterPro" id="IPR018253">
    <property type="entry name" value="DnaJ_domain_CS"/>
</dbReference>
<dbReference type="InterPro" id="IPR008971">
    <property type="entry name" value="HSP40/DnaJ_pept-bd"/>
</dbReference>
<dbReference type="InterPro" id="IPR001305">
    <property type="entry name" value="HSP_DnaJ_Cys-rich_dom"/>
</dbReference>
<dbReference type="InterPro" id="IPR036410">
    <property type="entry name" value="HSP_DnaJ_Cys-rich_dom_sf"/>
</dbReference>
<dbReference type="InterPro" id="IPR036869">
    <property type="entry name" value="J_dom_sf"/>
</dbReference>
<dbReference type="NCBIfam" id="TIGR02349">
    <property type="entry name" value="DnaJ_bact"/>
    <property type="match status" value="1"/>
</dbReference>
<dbReference type="NCBIfam" id="NF008035">
    <property type="entry name" value="PRK10767.1"/>
    <property type="match status" value="1"/>
</dbReference>
<dbReference type="NCBIfam" id="NF010878">
    <property type="entry name" value="PRK14285.1"/>
    <property type="match status" value="1"/>
</dbReference>
<dbReference type="PANTHER" id="PTHR43096:SF48">
    <property type="entry name" value="CHAPERONE PROTEIN DNAJ"/>
    <property type="match status" value="1"/>
</dbReference>
<dbReference type="PANTHER" id="PTHR43096">
    <property type="entry name" value="DNAJ HOMOLOG 1, MITOCHONDRIAL-RELATED"/>
    <property type="match status" value="1"/>
</dbReference>
<dbReference type="Pfam" id="PF00226">
    <property type="entry name" value="DnaJ"/>
    <property type="match status" value="1"/>
</dbReference>
<dbReference type="Pfam" id="PF01556">
    <property type="entry name" value="DnaJ_C"/>
    <property type="match status" value="1"/>
</dbReference>
<dbReference type="Pfam" id="PF00684">
    <property type="entry name" value="DnaJ_CXXCXGXG"/>
    <property type="match status" value="1"/>
</dbReference>
<dbReference type="PRINTS" id="PR00625">
    <property type="entry name" value="JDOMAIN"/>
</dbReference>
<dbReference type="SMART" id="SM00271">
    <property type="entry name" value="DnaJ"/>
    <property type="match status" value="1"/>
</dbReference>
<dbReference type="SUPFAM" id="SSF46565">
    <property type="entry name" value="Chaperone J-domain"/>
    <property type="match status" value="1"/>
</dbReference>
<dbReference type="SUPFAM" id="SSF57938">
    <property type="entry name" value="DnaJ/Hsp40 cysteine-rich domain"/>
    <property type="match status" value="1"/>
</dbReference>
<dbReference type="SUPFAM" id="SSF49493">
    <property type="entry name" value="HSP40/DnaJ peptide-binding domain"/>
    <property type="match status" value="2"/>
</dbReference>
<dbReference type="PROSITE" id="PS00636">
    <property type="entry name" value="DNAJ_1"/>
    <property type="match status" value="1"/>
</dbReference>
<dbReference type="PROSITE" id="PS50076">
    <property type="entry name" value="DNAJ_2"/>
    <property type="match status" value="1"/>
</dbReference>
<dbReference type="PROSITE" id="PS51188">
    <property type="entry name" value="ZF_CR"/>
    <property type="match status" value="1"/>
</dbReference>